<evidence type="ECO:0000255" key="1">
    <source>
        <dbReference type="HAMAP-Rule" id="MF_01337"/>
    </source>
</evidence>
<evidence type="ECO:0000305" key="2"/>
<comment type="function">
    <text evidence="1">This is one of the proteins that bind and probably mediate the attachment of the 5S RNA into the large ribosomal subunit, where it forms part of the central protuberance.</text>
</comment>
<comment type="subunit">
    <text evidence="1">Part of the 50S ribosomal subunit; part of the 5S rRNA/L5/L18/L25 subcomplex. Contacts the 5S and 23S rRNAs.</text>
</comment>
<comment type="similarity">
    <text evidence="1">Belongs to the universal ribosomal protein uL18 family.</text>
</comment>
<feature type="chain" id="PRO_1000142627" description="Large ribosomal subunit protein uL18">
    <location>
        <begin position="1"/>
        <end position="119"/>
    </location>
</feature>
<dbReference type="EMBL" id="CP000993">
    <property type="protein sequence ID" value="ACH94732.1"/>
    <property type="molecule type" value="Genomic_DNA"/>
</dbReference>
<dbReference type="RefSeq" id="WP_012538940.1">
    <property type="nucleotide sequence ID" value="NC_011244.1"/>
</dbReference>
<dbReference type="SMR" id="B5RPJ8"/>
<dbReference type="KEGG" id="bre:BRE_500"/>
<dbReference type="HOGENOM" id="CLU_098841_0_1_12"/>
<dbReference type="Proteomes" id="UP000000612">
    <property type="component" value="Chromosome"/>
</dbReference>
<dbReference type="GO" id="GO:0022625">
    <property type="term" value="C:cytosolic large ribosomal subunit"/>
    <property type="evidence" value="ECO:0007669"/>
    <property type="project" value="TreeGrafter"/>
</dbReference>
<dbReference type="GO" id="GO:0008097">
    <property type="term" value="F:5S rRNA binding"/>
    <property type="evidence" value="ECO:0007669"/>
    <property type="project" value="TreeGrafter"/>
</dbReference>
<dbReference type="GO" id="GO:0003735">
    <property type="term" value="F:structural constituent of ribosome"/>
    <property type="evidence" value="ECO:0007669"/>
    <property type="project" value="InterPro"/>
</dbReference>
<dbReference type="GO" id="GO:0006412">
    <property type="term" value="P:translation"/>
    <property type="evidence" value="ECO:0007669"/>
    <property type="project" value="UniProtKB-UniRule"/>
</dbReference>
<dbReference type="CDD" id="cd00432">
    <property type="entry name" value="Ribosomal_L18_L5e"/>
    <property type="match status" value="1"/>
</dbReference>
<dbReference type="Gene3D" id="3.30.420.100">
    <property type="match status" value="1"/>
</dbReference>
<dbReference type="HAMAP" id="MF_01337_B">
    <property type="entry name" value="Ribosomal_uL18_B"/>
    <property type="match status" value="1"/>
</dbReference>
<dbReference type="InterPro" id="IPR004389">
    <property type="entry name" value="Ribosomal_uL18_bac-type"/>
</dbReference>
<dbReference type="InterPro" id="IPR005484">
    <property type="entry name" value="Ribosomal_uL18_bac/euk"/>
</dbReference>
<dbReference type="NCBIfam" id="TIGR00060">
    <property type="entry name" value="L18_bact"/>
    <property type="match status" value="1"/>
</dbReference>
<dbReference type="PANTHER" id="PTHR12899">
    <property type="entry name" value="39S RIBOSOMAL PROTEIN L18, MITOCHONDRIAL"/>
    <property type="match status" value="1"/>
</dbReference>
<dbReference type="PANTHER" id="PTHR12899:SF3">
    <property type="entry name" value="LARGE RIBOSOMAL SUBUNIT PROTEIN UL18M"/>
    <property type="match status" value="1"/>
</dbReference>
<dbReference type="Pfam" id="PF00861">
    <property type="entry name" value="Ribosomal_L18p"/>
    <property type="match status" value="1"/>
</dbReference>
<dbReference type="SUPFAM" id="SSF53137">
    <property type="entry name" value="Translational machinery components"/>
    <property type="match status" value="1"/>
</dbReference>
<organism>
    <name type="scientific">Borrelia recurrentis (strain A1)</name>
    <dbReference type="NCBI Taxonomy" id="412418"/>
    <lineage>
        <taxon>Bacteria</taxon>
        <taxon>Pseudomonadati</taxon>
        <taxon>Spirochaetota</taxon>
        <taxon>Spirochaetia</taxon>
        <taxon>Spirochaetales</taxon>
        <taxon>Borreliaceae</taxon>
        <taxon>Borrelia</taxon>
    </lineage>
</organism>
<sequence>MKKVKEAEKKNIKRKKRIRDRIGFGVAERPRVTIFKSNKYFYAQVIDDIVGRTLASVSTIEKELSLNKNISDVKKLGEVLAKRLKDKNISKLIFDRNGYKYHGLIAGFATALREAGIDV</sequence>
<protein>
    <recommendedName>
        <fullName evidence="1">Large ribosomal subunit protein uL18</fullName>
    </recommendedName>
    <alternativeName>
        <fullName evidence="2">50S ribosomal protein L18</fullName>
    </alternativeName>
</protein>
<gene>
    <name evidence="1" type="primary">rplR</name>
    <name type="ordered locus">BRE_500</name>
</gene>
<keyword id="KW-0687">Ribonucleoprotein</keyword>
<keyword id="KW-0689">Ribosomal protein</keyword>
<keyword id="KW-0694">RNA-binding</keyword>
<keyword id="KW-0699">rRNA-binding</keyword>
<reference key="1">
    <citation type="journal article" date="2008" name="PLoS Genet.">
        <title>The genome of Borrelia recurrentis, the agent of deadly louse-borne relapsing fever, is a degraded subset of tick-borne Borrelia duttonii.</title>
        <authorList>
            <person name="Lescot M."/>
            <person name="Audic S."/>
            <person name="Robert C."/>
            <person name="Nguyen T.T."/>
            <person name="Blanc G."/>
            <person name="Cutler S.J."/>
            <person name="Wincker P."/>
            <person name="Couloux A."/>
            <person name="Claverie J.-M."/>
            <person name="Raoult D."/>
            <person name="Drancourt M."/>
        </authorList>
    </citation>
    <scope>NUCLEOTIDE SEQUENCE [LARGE SCALE GENOMIC DNA]</scope>
    <source>
        <strain>A1</strain>
    </source>
</reference>
<accession>B5RPJ8</accession>
<name>RL18_BORRA</name>
<proteinExistence type="inferred from homology"/>